<keyword id="KW-0378">Hydrolase</keyword>
<keyword id="KW-0460">Magnesium</keyword>
<keyword id="KW-0479">Metal-binding</keyword>
<keyword id="KW-0546">Nucleotide metabolism</keyword>
<keyword id="KW-0547">Nucleotide-binding</keyword>
<keyword id="KW-1185">Reference proteome</keyword>
<dbReference type="EC" id="3.6.1.66" evidence="1"/>
<dbReference type="EMBL" id="AE014299">
    <property type="protein sequence ID" value="AAN56356.1"/>
    <property type="molecule type" value="Genomic_DNA"/>
</dbReference>
<dbReference type="RefSeq" id="NP_718912.1">
    <property type="nucleotide sequence ID" value="NC_004347.2"/>
</dbReference>
<dbReference type="RefSeq" id="WP_011073227.1">
    <property type="nucleotide sequence ID" value="NC_004347.2"/>
</dbReference>
<dbReference type="SMR" id="Q8EBY7"/>
<dbReference type="STRING" id="211586.SO_3358"/>
<dbReference type="PaxDb" id="211586-SO_3358"/>
<dbReference type="KEGG" id="son:SO_3358"/>
<dbReference type="PATRIC" id="fig|211586.12.peg.3258"/>
<dbReference type="eggNOG" id="COG0127">
    <property type="taxonomic scope" value="Bacteria"/>
</dbReference>
<dbReference type="HOGENOM" id="CLU_082080_0_3_6"/>
<dbReference type="OrthoDB" id="9807456at2"/>
<dbReference type="PhylomeDB" id="Q8EBY7"/>
<dbReference type="BioCyc" id="SONE211586:G1GMP-3125-MONOMER"/>
<dbReference type="Proteomes" id="UP000008186">
    <property type="component" value="Chromosome"/>
</dbReference>
<dbReference type="GO" id="GO:0005737">
    <property type="term" value="C:cytoplasm"/>
    <property type="evidence" value="ECO:0000318"/>
    <property type="project" value="GO_Central"/>
</dbReference>
<dbReference type="GO" id="GO:0005829">
    <property type="term" value="C:cytosol"/>
    <property type="evidence" value="ECO:0000318"/>
    <property type="project" value="GO_Central"/>
</dbReference>
<dbReference type="GO" id="GO:0035870">
    <property type="term" value="F:dITP diphosphatase activity"/>
    <property type="evidence" value="ECO:0007669"/>
    <property type="project" value="RHEA"/>
</dbReference>
<dbReference type="GO" id="GO:0036220">
    <property type="term" value="F:ITP diphosphatase activity"/>
    <property type="evidence" value="ECO:0007669"/>
    <property type="project" value="UniProtKB-EC"/>
</dbReference>
<dbReference type="GO" id="GO:0046872">
    <property type="term" value="F:metal ion binding"/>
    <property type="evidence" value="ECO:0007669"/>
    <property type="project" value="UniProtKB-KW"/>
</dbReference>
<dbReference type="GO" id="GO:0047429">
    <property type="term" value="F:nucleoside triphosphate diphosphatase activity"/>
    <property type="evidence" value="ECO:0000318"/>
    <property type="project" value="GO_Central"/>
</dbReference>
<dbReference type="GO" id="GO:0000166">
    <property type="term" value="F:nucleotide binding"/>
    <property type="evidence" value="ECO:0007669"/>
    <property type="project" value="UniProtKB-KW"/>
</dbReference>
<dbReference type="GO" id="GO:0017111">
    <property type="term" value="F:ribonucleoside triphosphate phosphatase activity"/>
    <property type="evidence" value="ECO:0007669"/>
    <property type="project" value="InterPro"/>
</dbReference>
<dbReference type="GO" id="GO:0036222">
    <property type="term" value="F:XTP diphosphatase activity"/>
    <property type="evidence" value="ECO:0007669"/>
    <property type="project" value="RHEA"/>
</dbReference>
<dbReference type="GO" id="GO:0009143">
    <property type="term" value="P:nucleoside triphosphate catabolic process"/>
    <property type="evidence" value="ECO:0000318"/>
    <property type="project" value="GO_Central"/>
</dbReference>
<dbReference type="GO" id="GO:0009117">
    <property type="term" value="P:nucleotide metabolic process"/>
    <property type="evidence" value="ECO:0007669"/>
    <property type="project" value="UniProtKB-KW"/>
</dbReference>
<dbReference type="GO" id="GO:0009146">
    <property type="term" value="P:purine nucleoside triphosphate catabolic process"/>
    <property type="evidence" value="ECO:0007669"/>
    <property type="project" value="UniProtKB-UniRule"/>
</dbReference>
<dbReference type="CDD" id="cd00515">
    <property type="entry name" value="HAM1"/>
    <property type="match status" value="1"/>
</dbReference>
<dbReference type="FunFam" id="3.90.950.10:FF:000001">
    <property type="entry name" value="dITP/XTP pyrophosphatase"/>
    <property type="match status" value="1"/>
</dbReference>
<dbReference type="Gene3D" id="3.90.950.10">
    <property type="match status" value="1"/>
</dbReference>
<dbReference type="HAMAP" id="MF_01405">
    <property type="entry name" value="Non_canon_purine_NTPase"/>
    <property type="match status" value="1"/>
</dbReference>
<dbReference type="InterPro" id="IPR020922">
    <property type="entry name" value="dITP/XTP_pyrophosphatase"/>
</dbReference>
<dbReference type="InterPro" id="IPR029001">
    <property type="entry name" value="ITPase-like_fam"/>
</dbReference>
<dbReference type="InterPro" id="IPR002637">
    <property type="entry name" value="RdgB/HAM1"/>
</dbReference>
<dbReference type="NCBIfam" id="TIGR00042">
    <property type="entry name" value="RdgB/HAM1 family non-canonical purine NTP pyrophosphatase"/>
    <property type="match status" value="1"/>
</dbReference>
<dbReference type="PANTHER" id="PTHR11067:SF9">
    <property type="entry name" value="INOSINE TRIPHOSPHATE PYROPHOSPHATASE"/>
    <property type="match status" value="1"/>
</dbReference>
<dbReference type="PANTHER" id="PTHR11067">
    <property type="entry name" value="INOSINE TRIPHOSPHATE PYROPHOSPHATASE/HAM1 PROTEIN"/>
    <property type="match status" value="1"/>
</dbReference>
<dbReference type="Pfam" id="PF01725">
    <property type="entry name" value="Ham1p_like"/>
    <property type="match status" value="1"/>
</dbReference>
<dbReference type="SUPFAM" id="SSF52972">
    <property type="entry name" value="ITPase-like"/>
    <property type="match status" value="1"/>
</dbReference>
<evidence type="ECO:0000255" key="1">
    <source>
        <dbReference type="HAMAP-Rule" id="MF_01405"/>
    </source>
</evidence>
<name>IXTPA_SHEON</name>
<reference key="1">
    <citation type="journal article" date="2002" name="Nat. Biotechnol.">
        <title>Genome sequence of the dissimilatory metal ion-reducing bacterium Shewanella oneidensis.</title>
        <authorList>
            <person name="Heidelberg J.F."/>
            <person name="Paulsen I.T."/>
            <person name="Nelson K.E."/>
            <person name="Gaidos E.J."/>
            <person name="Nelson W.C."/>
            <person name="Read T.D."/>
            <person name="Eisen J.A."/>
            <person name="Seshadri R."/>
            <person name="Ward N.L."/>
            <person name="Methe B.A."/>
            <person name="Clayton R.A."/>
            <person name="Meyer T."/>
            <person name="Tsapin A."/>
            <person name="Scott J."/>
            <person name="Beanan M.J."/>
            <person name="Brinkac L.M."/>
            <person name="Daugherty S.C."/>
            <person name="DeBoy R.T."/>
            <person name="Dodson R.J."/>
            <person name="Durkin A.S."/>
            <person name="Haft D.H."/>
            <person name="Kolonay J.F."/>
            <person name="Madupu R."/>
            <person name="Peterson J.D."/>
            <person name="Umayam L.A."/>
            <person name="White O."/>
            <person name="Wolf A.M."/>
            <person name="Vamathevan J.J."/>
            <person name="Weidman J.F."/>
            <person name="Impraim M."/>
            <person name="Lee K."/>
            <person name="Berry K.J."/>
            <person name="Lee C."/>
            <person name="Mueller J."/>
            <person name="Khouri H.M."/>
            <person name="Gill J."/>
            <person name="Utterback T.R."/>
            <person name="McDonald L.A."/>
            <person name="Feldblyum T.V."/>
            <person name="Smith H.O."/>
            <person name="Venter J.C."/>
            <person name="Nealson K.H."/>
            <person name="Fraser C.M."/>
        </authorList>
    </citation>
    <scope>NUCLEOTIDE SEQUENCE [LARGE SCALE GENOMIC DNA]</scope>
    <source>
        <strain>ATCC 700550 / JCM 31522 / CIP 106686 / LMG 19005 / NCIMB 14063 / MR-1</strain>
    </source>
</reference>
<comment type="function">
    <text evidence="1">Pyrophosphatase that catalyzes the hydrolysis of nucleoside triphosphates to their monophosphate derivatives, with a high preference for the non-canonical purine nucleotides XTP (xanthosine triphosphate), dITP (deoxyinosine triphosphate) and ITP. Seems to function as a house-cleaning enzyme that removes non-canonical purine nucleotides from the nucleotide pool, thus preventing their incorporation into DNA/RNA and avoiding chromosomal lesions.</text>
</comment>
<comment type="catalytic activity">
    <reaction evidence="1">
        <text>XTP + H2O = XMP + diphosphate + H(+)</text>
        <dbReference type="Rhea" id="RHEA:28610"/>
        <dbReference type="ChEBI" id="CHEBI:15377"/>
        <dbReference type="ChEBI" id="CHEBI:15378"/>
        <dbReference type="ChEBI" id="CHEBI:33019"/>
        <dbReference type="ChEBI" id="CHEBI:57464"/>
        <dbReference type="ChEBI" id="CHEBI:61314"/>
        <dbReference type="EC" id="3.6.1.66"/>
    </reaction>
</comment>
<comment type="catalytic activity">
    <reaction evidence="1">
        <text>dITP + H2O = dIMP + diphosphate + H(+)</text>
        <dbReference type="Rhea" id="RHEA:28342"/>
        <dbReference type="ChEBI" id="CHEBI:15377"/>
        <dbReference type="ChEBI" id="CHEBI:15378"/>
        <dbReference type="ChEBI" id="CHEBI:33019"/>
        <dbReference type="ChEBI" id="CHEBI:61194"/>
        <dbReference type="ChEBI" id="CHEBI:61382"/>
        <dbReference type="EC" id="3.6.1.66"/>
    </reaction>
</comment>
<comment type="catalytic activity">
    <reaction evidence="1">
        <text>ITP + H2O = IMP + diphosphate + H(+)</text>
        <dbReference type="Rhea" id="RHEA:29399"/>
        <dbReference type="ChEBI" id="CHEBI:15377"/>
        <dbReference type="ChEBI" id="CHEBI:15378"/>
        <dbReference type="ChEBI" id="CHEBI:33019"/>
        <dbReference type="ChEBI" id="CHEBI:58053"/>
        <dbReference type="ChEBI" id="CHEBI:61402"/>
        <dbReference type="EC" id="3.6.1.66"/>
    </reaction>
</comment>
<comment type="cofactor">
    <cofactor evidence="1">
        <name>Mg(2+)</name>
        <dbReference type="ChEBI" id="CHEBI:18420"/>
    </cofactor>
    <text evidence="1">Binds 1 Mg(2+) ion per subunit.</text>
</comment>
<comment type="subunit">
    <text evidence="1">Homodimer.</text>
</comment>
<comment type="similarity">
    <text evidence="1">Belongs to the HAM1 NTPase family.</text>
</comment>
<feature type="chain" id="PRO_0000178224" description="dITP/XTP pyrophosphatase">
    <location>
        <begin position="1"/>
        <end position="205"/>
    </location>
</feature>
<feature type="active site" description="Proton acceptor" evidence="1">
    <location>
        <position position="69"/>
    </location>
</feature>
<feature type="binding site" evidence="1">
    <location>
        <begin position="8"/>
        <end position="13"/>
    </location>
    <ligand>
        <name>substrate</name>
    </ligand>
</feature>
<feature type="binding site" evidence="1">
    <location>
        <position position="69"/>
    </location>
    <ligand>
        <name>Mg(2+)</name>
        <dbReference type="ChEBI" id="CHEBI:18420"/>
    </ligand>
</feature>
<feature type="binding site" evidence="1">
    <location>
        <position position="70"/>
    </location>
    <ligand>
        <name>substrate</name>
    </ligand>
</feature>
<feature type="binding site" evidence="1">
    <location>
        <begin position="153"/>
        <end position="156"/>
    </location>
    <ligand>
        <name>substrate</name>
    </ligand>
</feature>
<feature type="binding site" evidence="1">
    <location>
        <position position="176"/>
    </location>
    <ligand>
        <name>substrate</name>
    </ligand>
</feature>
<feature type="binding site" evidence="1">
    <location>
        <begin position="181"/>
        <end position="182"/>
    </location>
    <ligand>
        <name>substrate</name>
    </ligand>
</feature>
<organism>
    <name type="scientific">Shewanella oneidensis (strain ATCC 700550 / JCM 31522 / CIP 106686 / LMG 19005 / NCIMB 14063 / MR-1)</name>
    <dbReference type="NCBI Taxonomy" id="211586"/>
    <lineage>
        <taxon>Bacteria</taxon>
        <taxon>Pseudomonadati</taxon>
        <taxon>Pseudomonadota</taxon>
        <taxon>Gammaproteobacteria</taxon>
        <taxon>Alteromonadales</taxon>
        <taxon>Shewanellaceae</taxon>
        <taxon>Shewanella</taxon>
    </lineage>
</organism>
<accession>Q8EBY7</accession>
<gene>
    <name type="ordered locus">SO_3358</name>
</gene>
<sequence>MQQIVLASGNKGKLAEFDQMLAAYGVKVLPQSQFNVSEVAETGTTFVENAIIKARHAAQITGHAAIADDSGLEVDLLQGVPGIYSARYAGENAKDQDNVLKLLDTLKDYPAPRTARFQCVLVYMRHAKDPTPIICQASWEGQIDFVQRGDNGHGYDPIFIPEHHDCSAAQMSSDEKNTLSHRGKALVQLITAMQEKGVFTDRNAQ</sequence>
<proteinExistence type="inferred from homology"/>
<protein>
    <recommendedName>
        <fullName evidence="1">dITP/XTP pyrophosphatase</fullName>
        <ecNumber evidence="1">3.6.1.66</ecNumber>
    </recommendedName>
    <alternativeName>
        <fullName evidence="1">Non-canonical purine NTP pyrophosphatase</fullName>
    </alternativeName>
    <alternativeName>
        <fullName evidence="1">Non-standard purine NTP pyrophosphatase</fullName>
    </alternativeName>
    <alternativeName>
        <fullName evidence="1">Nucleoside-triphosphate diphosphatase</fullName>
    </alternativeName>
    <alternativeName>
        <fullName evidence="1">Nucleoside-triphosphate pyrophosphatase</fullName>
        <shortName evidence="1">NTPase</shortName>
    </alternativeName>
</protein>